<keyword id="KW-0520">NAD</keyword>
<keyword id="KW-0560">Oxidoreductase</keyword>
<keyword id="KW-0816">Tricarboxylic acid cycle</keyword>
<accession>B3CM44</accession>
<sequence>MTAQRKKISLIGAGNIGGTLAHMIALRELGDVILLDVSDGIPQGKALDITESSPIDRSNVNITGTNRYEDIKNSDAIIITAGIARKPGMSRDDLLQTNAAVMKEVGENIKKHSPNAFVIVVTNPLDAMVSVVYKSSSLPTNMIVGMAGVLDSARFRYFLASELNISVEDVSAFVLGGHGDTMVPLINYASIAGIPLTQIIEMGVITRGKVDEIVERTRNGGKEIVDLLKSGSAYYAPASSAISMLESYLKDKRRILPCAAYLNGEYGVKDLFIGVPTIIGKNGVEKVLEVKMNDSEQEMFYKSVSAVKELCQLN</sequence>
<reference key="1">
    <citation type="journal article" date="2008" name="Mol. Biol. Evol.">
        <title>Genome evolution of Wolbachia strain wPip from the Culex pipiens group.</title>
        <authorList>
            <person name="Klasson L."/>
            <person name="Walker T."/>
            <person name="Sebaihia M."/>
            <person name="Sanders M.J."/>
            <person name="Quail M.A."/>
            <person name="Lord A."/>
            <person name="Sanders S."/>
            <person name="Earl J."/>
            <person name="O'Neill S.L."/>
            <person name="Thomson N."/>
            <person name="Sinkins S.P."/>
            <person name="Parkhill J."/>
        </authorList>
    </citation>
    <scope>NUCLEOTIDE SEQUENCE [LARGE SCALE GENOMIC DNA]</scope>
    <source>
        <strain>wPip</strain>
    </source>
</reference>
<comment type="function">
    <text evidence="1">Catalyzes the reversible oxidation of malate to oxaloacetate.</text>
</comment>
<comment type="catalytic activity">
    <reaction evidence="1">
        <text>(S)-malate + NAD(+) = oxaloacetate + NADH + H(+)</text>
        <dbReference type="Rhea" id="RHEA:21432"/>
        <dbReference type="ChEBI" id="CHEBI:15378"/>
        <dbReference type="ChEBI" id="CHEBI:15589"/>
        <dbReference type="ChEBI" id="CHEBI:16452"/>
        <dbReference type="ChEBI" id="CHEBI:57540"/>
        <dbReference type="ChEBI" id="CHEBI:57945"/>
        <dbReference type="EC" id="1.1.1.37"/>
    </reaction>
</comment>
<comment type="similarity">
    <text evidence="1">Belongs to the LDH/MDH superfamily. MDH type 3 family.</text>
</comment>
<evidence type="ECO:0000255" key="1">
    <source>
        <dbReference type="HAMAP-Rule" id="MF_00487"/>
    </source>
</evidence>
<organism>
    <name type="scientific">Wolbachia pipientis subsp. Culex pipiens (strain wPip)</name>
    <dbReference type="NCBI Taxonomy" id="570417"/>
    <lineage>
        <taxon>Bacteria</taxon>
        <taxon>Pseudomonadati</taxon>
        <taxon>Pseudomonadota</taxon>
        <taxon>Alphaproteobacteria</taxon>
        <taxon>Rickettsiales</taxon>
        <taxon>Anaplasmataceae</taxon>
        <taxon>Wolbachieae</taxon>
        <taxon>Wolbachia</taxon>
    </lineage>
</organism>
<feature type="chain" id="PRO_1000126150" description="Malate dehydrogenase">
    <location>
        <begin position="1"/>
        <end position="314"/>
    </location>
</feature>
<feature type="active site" description="Proton acceptor" evidence="1">
    <location>
        <position position="178"/>
    </location>
</feature>
<feature type="binding site" evidence="1">
    <location>
        <begin position="12"/>
        <end position="17"/>
    </location>
    <ligand>
        <name>NAD(+)</name>
        <dbReference type="ChEBI" id="CHEBI:57540"/>
    </ligand>
</feature>
<feature type="binding site" evidence="1">
    <location>
        <position position="36"/>
    </location>
    <ligand>
        <name>NAD(+)</name>
        <dbReference type="ChEBI" id="CHEBI:57540"/>
    </ligand>
</feature>
<feature type="binding site" evidence="1">
    <location>
        <position position="85"/>
    </location>
    <ligand>
        <name>substrate</name>
    </ligand>
</feature>
<feature type="binding site" evidence="1">
    <location>
        <position position="91"/>
    </location>
    <ligand>
        <name>substrate</name>
    </ligand>
</feature>
<feature type="binding site" evidence="1">
    <location>
        <position position="98"/>
    </location>
    <ligand>
        <name>NAD(+)</name>
        <dbReference type="ChEBI" id="CHEBI:57540"/>
    </ligand>
</feature>
<feature type="binding site" evidence="1">
    <location>
        <begin position="121"/>
        <end position="123"/>
    </location>
    <ligand>
        <name>NAD(+)</name>
        <dbReference type="ChEBI" id="CHEBI:57540"/>
    </ligand>
</feature>
<feature type="binding site" evidence="1">
    <location>
        <position position="123"/>
    </location>
    <ligand>
        <name>substrate</name>
    </ligand>
</feature>
<feature type="binding site" evidence="1">
    <location>
        <position position="154"/>
    </location>
    <ligand>
        <name>substrate</name>
    </ligand>
</feature>
<protein>
    <recommendedName>
        <fullName evidence="1">Malate dehydrogenase</fullName>
        <ecNumber evidence="1">1.1.1.37</ecNumber>
    </recommendedName>
</protein>
<dbReference type="EC" id="1.1.1.37" evidence="1"/>
<dbReference type="EMBL" id="AM999887">
    <property type="protein sequence ID" value="CAQ54963.1"/>
    <property type="molecule type" value="Genomic_DNA"/>
</dbReference>
<dbReference type="RefSeq" id="WP_007302259.1">
    <property type="nucleotide sequence ID" value="NC_010981.1"/>
</dbReference>
<dbReference type="SMR" id="B3CM44"/>
<dbReference type="KEGG" id="wpi:WP0855"/>
<dbReference type="eggNOG" id="COG0039">
    <property type="taxonomic scope" value="Bacteria"/>
</dbReference>
<dbReference type="HOGENOM" id="CLU_045401_2_1_5"/>
<dbReference type="Proteomes" id="UP000008814">
    <property type="component" value="Chromosome"/>
</dbReference>
<dbReference type="GO" id="GO:0004459">
    <property type="term" value="F:L-lactate dehydrogenase activity"/>
    <property type="evidence" value="ECO:0007669"/>
    <property type="project" value="TreeGrafter"/>
</dbReference>
<dbReference type="GO" id="GO:0030060">
    <property type="term" value="F:L-malate dehydrogenase (NAD+) activity"/>
    <property type="evidence" value="ECO:0007669"/>
    <property type="project" value="UniProtKB-UniRule"/>
</dbReference>
<dbReference type="GO" id="GO:0006089">
    <property type="term" value="P:lactate metabolic process"/>
    <property type="evidence" value="ECO:0007669"/>
    <property type="project" value="TreeGrafter"/>
</dbReference>
<dbReference type="GO" id="GO:0006099">
    <property type="term" value="P:tricarboxylic acid cycle"/>
    <property type="evidence" value="ECO:0007669"/>
    <property type="project" value="UniProtKB-UniRule"/>
</dbReference>
<dbReference type="CDD" id="cd01339">
    <property type="entry name" value="LDH-like_MDH"/>
    <property type="match status" value="1"/>
</dbReference>
<dbReference type="FunFam" id="3.40.50.720:FF:000018">
    <property type="entry name" value="Malate dehydrogenase"/>
    <property type="match status" value="1"/>
</dbReference>
<dbReference type="FunFam" id="3.90.110.10:FF:000004">
    <property type="entry name" value="Malate dehydrogenase"/>
    <property type="match status" value="1"/>
</dbReference>
<dbReference type="Gene3D" id="3.90.110.10">
    <property type="entry name" value="Lactate dehydrogenase/glycoside hydrolase, family 4, C-terminal"/>
    <property type="match status" value="1"/>
</dbReference>
<dbReference type="Gene3D" id="3.40.50.720">
    <property type="entry name" value="NAD(P)-binding Rossmann-like Domain"/>
    <property type="match status" value="1"/>
</dbReference>
<dbReference type="HAMAP" id="MF_00487">
    <property type="entry name" value="Malate_dehydrog_3"/>
    <property type="match status" value="1"/>
</dbReference>
<dbReference type="InterPro" id="IPR001557">
    <property type="entry name" value="L-lactate/malate_DH"/>
</dbReference>
<dbReference type="InterPro" id="IPR022383">
    <property type="entry name" value="Lactate/malate_DH_C"/>
</dbReference>
<dbReference type="InterPro" id="IPR001236">
    <property type="entry name" value="Lactate/malate_DH_N"/>
</dbReference>
<dbReference type="InterPro" id="IPR015955">
    <property type="entry name" value="Lactate_DH/Glyco_Ohase_4_C"/>
</dbReference>
<dbReference type="InterPro" id="IPR011275">
    <property type="entry name" value="Malate_DH_type3"/>
</dbReference>
<dbReference type="InterPro" id="IPR036291">
    <property type="entry name" value="NAD(P)-bd_dom_sf"/>
</dbReference>
<dbReference type="NCBIfam" id="TIGR01763">
    <property type="entry name" value="MalateDH_bact"/>
    <property type="match status" value="1"/>
</dbReference>
<dbReference type="NCBIfam" id="NF004863">
    <property type="entry name" value="PRK06223.1"/>
    <property type="match status" value="1"/>
</dbReference>
<dbReference type="PANTHER" id="PTHR43128">
    <property type="entry name" value="L-2-HYDROXYCARBOXYLATE DEHYDROGENASE (NAD(P)(+))"/>
    <property type="match status" value="1"/>
</dbReference>
<dbReference type="PANTHER" id="PTHR43128:SF16">
    <property type="entry name" value="L-LACTATE DEHYDROGENASE"/>
    <property type="match status" value="1"/>
</dbReference>
<dbReference type="Pfam" id="PF02866">
    <property type="entry name" value="Ldh_1_C"/>
    <property type="match status" value="1"/>
</dbReference>
<dbReference type="Pfam" id="PF00056">
    <property type="entry name" value="Ldh_1_N"/>
    <property type="match status" value="1"/>
</dbReference>
<dbReference type="PIRSF" id="PIRSF000102">
    <property type="entry name" value="Lac_mal_DH"/>
    <property type="match status" value="1"/>
</dbReference>
<dbReference type="PRINTS" id="PR00086">
    <property type="entry name" value="LLDHDRGNASE"/>
</dbReference>
<dbReference type="SUPFAM" id="SSF56327">
    <property type="entry name" value="LDH C-terminal domain-like"/>
    <property type="match status" value="1"/>
</dbReference>
<dbReference type="SUPFAM" id="SSF51735">
    <property type="entry name" value="NAD(P)-binding Rossmann-fold domains"/>
    <property type="match status" value="1"/>
</dbReference>
<proteinExistence type="inferred from homology"/>
<name>MDH_WOLPP</name>
<gene>
    <name evidence="1" type="primary">mdh</name>
    <name type="ordered locus">WP0855</name>
</gene>